<reference key="1">
    <citation type="journal article" date="1995" name="Science">
        <title>The minimal gene complement of Mycoplasma genitalium.</title>
        <authorList>
            <person name="Fraser C.M."/>
            <person name="Gocayne J.D."/>
            <person name="White O."/>
            <person name="Adams M.D."/>
            <person name="Clayton R.A."/>
            <person name="Fleischmann R.D."/>
            <person name="Bult C.J."/>
            <person name="Kerlavage A.R."/>
            <person name="Sutton G.G."/>
            <person name="Kelley J.M."/>
            <person name="Fritchman J.L."/>
            <person name="Weidman J.F."/>
            <person name="Small K.V."/>
            <person name="Sandusky M."/>
            <person name="Fuhrmann J.L."/>
            <person name="Nguyen D.T."/>
            <person name="Utterback T.R."/>
            <person name="Saudek D.M."/>
            <person name="Phillips C.A."/>
            <person name="Merrick J.M."/>
            <person name="Tomb J.-F."/>
            <person name="Dougherty B.A."/>
            <person name="Bott K.F."/>
            <person name="Hu P.-C."/>
            <person name="Lucier T.S."/>
            <person name="Peterson S.N."/>
            <person name="Smith H.O."/>
            <person name="Hutchison C.A. III"/>
            <person name="Venter J.C."/>
        </authorList>
    </citation>
    <scope>NUCLEOTIDE SEQUENCE [LARGE SCALE GENOMIC DNA]</scope>
    <source>
        <strain>ATCC 33530 / DSM 19775 / NCTC 10195 / G37</strain>
    </source>
</reference>
<reference key="2">
    <citation type="submission" date="1998-10" db="EMBL/GenBank/DDBJ databases">
        <authorList>
            <person name="Fraser C.M."/>
            <person name="Gocayne J.D."/>
            <person name="White O."/>
            <person name="Adams M.D."/>
            <person name="Clayton R.A."/>
            <person name="Fleischmann R.D."/>
            <person name="Bult C.J."/>
            <person name="Kerlavage A.R."/>
            <person name="Sutton G.G."/>
            <person name="Kelley J.M."/>
            <person name="Fritchman J.L."/>
            <person name="Weidman J.F."/>
            <person name="Small K.V."/>
            <person name="Sandusky M."/>
            <person name="Fuhrmann J.L."/>
            <person name="Nguyen D.T."/>
            <person name="Utterback T.R."/>
            <person name="Saudek D.M."/>
            <person name="Phillips C.A."/>
            <person name="Merrick J.M."/>
            <person name="Tomb J.-F."/>
            <person name="Dougherty B.A."/>
            <person name="Bott K.F."/>
            <person name="Hu P.-C."/>
            <person name="Lucier T.S."/>
            <person name="Peterson S.N."/>
            <person name="Smith H.O."/>
            <person name="Hutchison C.A. III"/>
            <person name="Venter J.C."/>
        </authorList>
    </citation>
    <scope>SEQUENCE REVISION</scope>
</reference>
<reference key="3">
    <citation type="journal article" date="1994" name="J. Bacteriol.">
        <title>An unusual gene containing a dnaJ N-terminal box flanks the putative origin of replication of Mycoplasma genitalium.</title>
        <authorList>
            <person name="Bailey C.C."/>
            <person name="Bott K.F."/>
        </authorList>
    </citation>
    <scope>NUCLEOTIDE SEQUENCE [GENOMIC DNA] OF 283-380</scope>
    <source>
        <strain>ATCC 33530 / DSM 19775 / NCTC 10195 / G37</strain>
    </source>
</reference>
<reference key="4">
    <citation type="journal article" date="2006" name="Proc. Natl. Acad. Sci. U.S.A.">
        <title>Essential genes of a minimal bacterium.</title>
        <authorList>
            <person name="Glass J.I."/>
            <person name="Assad-Garcia N."/>
            <person name="Alperovich N."/>
            <person name="Yooseph S."/>
            <person name="Lewis M.R."/>
            <person name="Maruf M."/>
            <person name="Hutchison C.A. III"/>
            <person name="Smith H.O."/>
            <person name="Venter J.C."/>
        </authorList>
    </citation>
    <scope>SEQUENCE REVISION</scope>
    <scope>DISRUPTION PHENOTYPE</scope>
    <source>
        <strain>ATCC 33530 / DSM 19775 / NCTC 10195 / G37</strain>
    </source>
</reference>
<comment type="function">
    <text evidence="1">Confers DNA tethering and processivity to DNA polymerases and other proteins. Acts as a clamp, forming a ring around DNA (a reaction catalyzed by the clamp-loading complex) which diffuses in an ATP-independent manner freely and bidirectionally along dsDNA. Initially characterized for its ability to contact the catalytic subunit of DNA polymerase III (Pol III), a complex, multichain enzyme responsible for most of the replicative synthesis in bacteria; Pol III exhibits 3'-5' exonuclease proofreading activity. The beta chain is required for initiation of replication as well as for processivity of DNA replication.</text>
</comment>
<comment type="subunit">
    <text evidence="1">Forms a ring-shaped head-to-tail homodimer around DNA which binds and tethers DNA polymerases and other proteins to the DNA. The DNA replisome complex has a single clamp-loading complex (3 tau and 1 each of delta, delta', psi and chi subunits) which binds 3 Pol III cores (1 core on the leading strand and 2 on the lagging strand) each with a beta sliding clamp dimer. Additional proteins in the replisome are other copies of gamma, psi and chi, Ssb, DNA helicase and RNA primase.</text>
</comment>
<comment type="subcellular location">
    <subcellularLocation>
        <location evidence="1">Cytoplasm</location>
    </subcellularLocation>
</comment>
<comment type="disruption phenotype">
    <text evidence="2">Probably essential, it was not disrupted in a global transposon mutagenesis study.</text>
</comment>
<comment type="similarity">
    <text evidence="3">Belongs to the beta sliding clamp family.</text>
</comment>
<dbReference type="EMBL" id="L43967">
    <property type="protein sequence ID" value="AAC71217.2"/>
    <property type="molecule type" value="Genomic_DNA"/>
</dbReference>
<dbReference type="EMBL" id="U09251">
    <property type="protein sequence ID" value="AAA57069.1"/>
    <property type="molecule type" value="Genomic_DNA"/>
</dbReference>
<dbReference type="RefSeq" id="WP_009885562.1">
    <property type="nucleotide sequence ID" value="NC_000908.2"/>
</dbReference>
<dbReference type="SMR" id="P47247"/>
<dbReference type="FunCoup" id="P47247">
    <property type="interactions" value="149"/>
</dbReference>
<dbReference type="STRING" id="243273.MG_001"/>
<dbReference type="GeneID" id="88282116"/>
<dbReference type="KEGG" id="mge:MG_001"/>
<dbReference type="eggNOG" id="COG0592">
    <property type="taxonomic scope" value="Bacteria"/>
</dbReference>
<dbReference type="HOGENOM" id="CLU_727268_0_0_14"/>
<dbReference type="InParanoid" id="P47247"/>
<dbReference type="OrthoDB" id="397417at2"/>
<dbReference type="BioCyc" id="MGEN243273:G1GJ2-1-MONOMER"/>
<dbReference type="Proteomes" id="UP000000807">
    <property type="component" value="Chromosome"/>
</dbReference>
<dbReference type="GO" id="GO:0005737">
    <property type="term" value="C:cytoplasm"/>
    <property type="evidence" value="ECO:0007669"/>
    <property type="project" value="UniProtKB-SubCell"/>
</dbReference>
<dbReference type="GO" id="GO:0009360">
    <property type="term" value="C:DNA polymerase III complex"/>
    <property type="evidence" value="ECO:0007669"/>
    <property type="project" value="InterPro"/>
</dbReference>
<dbReference type="GO" id="GO:0008408">
    <property type="term" value="F:3'-5' exonuclease activity"/>
    <property type="evidence" value="ECO:0007669"/>
    <property type="project" value="InterPro"/>
</dbReference>
<dbReference type="GO" id="GO:0003677">
    <property type="term" value="F:DNA binding"/>
    <property type="evidence" value="ECO:0007669"/>
    <property type="project" value="UniProtKB-KW"/>
</dbReference>
<dbReference type="GO" id="GO:0003887">
    <property type="term" value="F:DNA-directed DNA polymerase activity"/>
    <property type="evidence" value="ECO:0007669"/>
    <property type="project" value="UniProtKB-KW"/>
</dbReference>
<dbReference type="GO" id="GO:0006271">
    <property type="term" value="P:DNA strand elongation involved in DNA replication"/>
    <property type="evidence" value="ECO:0000318"/>
    <property type="project" value="GO_Central"/>
</dbReference>
<dbReference type="CDD" id="cd00140">
    <property type="entry name" value="beta_clamp"/>
    <property type="match status" value="1"/>
</dbReference>
<dbReference type="Gene3D" id="3.70.10.10">
    <property type="match status" value="1"/>
</dbReference>
<dbReference type="Gene3D" id="3.10.150.10">
    <property type="entry name" value="DNA Polymerase III, subunit A, domain 2"/>
    <property type="match status" value="1"/>
</dbReference>
<dbReference type="InterPro" id="IPR046938">
    <property type="entry name" value="DNA_clamp_sf"/>
</dbReference>
<dbReference type="InterPro" id="IPR001001">
    <property type="entry name" value="DNA_polIII_beta"/>
</dbReference>
<dbReference type="InterPro" id="IPR022635">
    <property type="entry name" value="DNA_polIII_beta_C"/>
</dbReference>
<dbReference type="InterPro" id="IPR022634">
    <property type="entry name" value="DNA_polIII_beta_N"/>
</dbReference>
<dbReference type="NCBIfam" id="TIGR00663">
    <property type="entry name" value="dnan"/>
    <property type="match status" value="1"/>
</dbReference>
<dbReference type="PANTHER" id="PTHR30478:SF0">
    <property type="entry name" value="BETA SLIDING CLAMP"/>
    <property type="match status" value="1"/>
</dbReference>
<dbReference type="PANTHER" id="PTHR30478">
    <property type="entry name" value="DNA POLYMERASE III SUBUNIT BETA"/>
    <property type="match status" value="1"/>
</dbReference>
<dbReference type="Pfam" id="PF00712">
    <property type="entry name" value="DNA_pol3_beta"/>
    <property type="match status" value="1"/>
</dbReference>
<dbReference type="Pfam" id="PF02768">
    <property type="entry name" value="DNA_pol3_beta_3"/>
    <property type="match status" value="1"/>
</dbReference>
<dbReference type="SMART" id="SM00480">
    <property type="entry name" value="POL3Bc"/>
    <property type="match status" value="1"/>
</dbReference>
<dbReference type="SUPFAM" id="SSF55979">
    <property type="entry name" value="DNA clamp"/>
    <property type="match status" value="3"/>
</dbReference>
<name>DPO3B_MYCGE</name>
<organism>
    <name type="scientific">Mycoplasma genitalium (strain ATCC 33530 / DSM 19775 / NCTC 10195 / G37)</name>
    <name type="common">Mycoplasmoides genitalium</name>
    <dbReference type="NCBI Taxonomy" id="243273"/>
    <lineage>
        <taxon>Bacteria</taxon>
        <taxon>Bacillati</taxon>
        <taxon>Mycoplasmatota</taxon>
        <taxon>Mycoplasmoidales</taxon>
        <taxon>Mycoplasmoidaceae</taxon>
        <taxon>Mycoplasmoides</taxon>
    </lineage>
</organism>
<protein>
    <recommendedName>
        <fullName>Beta sliding clamp</fullName>
        <shortName>Beta clamp</shortName>
        <shortName>Sliding clamp</shortName>
    </recommendedName>
    <alternativeName>
        <fullName>Beta-clamp processivity factor</fullName>
    </alternativeName>
    <alternativeName>
        <fullName>DNA polymerase III beta sliding clamp subunit</fullName>
    </alternativeName>
    <alternativeName>
        <fullName>DNA polymerase III subunit beta</fullName>
    </alternativeName>
</protein>
<proteinExistence type="inferred from homology"/>
<evidence type="ECO:0000250" key="1">
    <source>
        <dbReference type="UniProtKB" id="P0A988"/>
    </source>
</evidence>
<evidence type="ECO:0000269" key="2">
    <source>
    </source>
</evidence>
<evidence type="ECO:0000305" key="3"/>
<gene>
    <name type="primary">dnaN</name>
    <name type="ordered locus">MG001</name>
</gene>
<feature type="chain" id="PRO_0000105445" description="Beta sliding clamp">
    <location>
        <begin position="1"/>
        <end position="380"/>
    </location>
</feature>
<accession>P47247</accession>
<keyword id="KW-0963">Cytoplasm</keyword>
<keyword id="KW-0235">DNA replication</keyword>
<keyword id="KW-0238">DNA-binding</keyword>
<keyword id="KW-0239">DNA-directed DNA polymerase</keyword>
<keyword id="KW-0548">Nucleotidyltransferase</keyword>
<keyword id="KW-1185">Reference proteome</keyword>
<keyword id="KW-0808">Transferase</keyword>
<sequence length="380" mass="44295">MKILINKSELNKILKKMNNVIISNNKIKPHHSYFLIEAKEKEINFYANNEYFSVKCNLNKNIDILEQGSLIVKGKIFNDLINGIKEEIITIQEKDQTLLVKTKKTSINLNTINVNEFPRIRFNEKNDLSEFNQFKINYSLLVKGIKKIFHSVSNNREISSKFNGVNFNGSNGKEIFLEASDTYKLSVFEIKQETEPFDFILESNLLSFINSFNPEEDKSIVFYYRKDNKDSFSTEMLISMDNFMISYTSVNEKFPEVNYFFEFEPETKIVVQKNELKDALQRIQTLAQNERTFLCDMQINSSELKIRAIVNNIGNSLEEISCLKFEGYKLNISFNPSSLLDHIESFESNEINFDFQGNSKYFLITSKSEPELKQILVPSR</sequence>